<name>UPPP_META3</name>
<keyword id="KW-1003">Cell membrane</keyword>
<keyword id="KW-0378">Hydrolase</keyword>
<keyword id="KW-0472">Membrane</keyword>
<keyword id="KW-0812">Transmembrane</keyword>
<keyword id="KW-1133">Transmembrane helix</keyword>
<dbReference type="EC" id="3.6.1.27" evidence="1"/>
<dbReference type="EMBL" id="CP000743">
    <property type="protein sequence ID" value="ABR56947.1"/>
    <property type="molecule type" value="Genomic_DNA"/>
</dbReference>
<dbReference type="RefSeq" id="WP_011974079.1">
    <property type="nucleotide sequence ID" value="NC_009635.1"/>
</dbReference>
<dbReference type="SMR" id="A6UWS5"/>
<dbReference type="STRING" id="419665.Maeo_1371"/>
<dbReference type="GeneID" id="5327384"/>
<dbReference type="KEGG" id="mae:Maeo_1371"/>
<dbReference type="eggNOG" id="arCOG04761">
    <property type="taxonomic scope" value="Archaea"/>
</dbReference>
<dbReference type="HOGENOM" id="CLU_060296_2_0_2"/>
<dbReference type="OrthoDB" id="65864at2157"/>
<dbReference type="Proteomes" id="UP000001106">
    <property type="component" value="Chromosome"/>
</dbReference>
<dbReference type="GO" id="GO:0005886">
    <property type="term" value="C:plasma membrane"/>
    <property type="evidence" value="ECO:0007669"/>
    <property type="project" value="UniProtKB-SubCell"/>
</dbReference>
<dbReference type="GO" id="GO:0050380">
    <property type="term" value="F:undecaprenyl-diphosphatase activity"/>
    <property type="evidence" value="ECO:0007669"/>
    <property type="project" value="UniProtKB-UniRule"/>
</dbReference>
<dbReference type="HAMAP" id="MF_01006">
    <property type="entry name" value="Undec_diphosphatase"/>
    <property type="match status" value="1"/>
</dbReference>
<dbReference type="InterPro" id="IPR003824">
    <property type="entry name" value="UppP"/>
</dbReference>
<dbReference type="NCBIfam" id="NF001389">
    <property type="entry name" value="PRK00281.1-2"/>
    <property type="match status" value="1"/>
</dbReference>
<dbReference type="NCBIfam" id="NF001390">
    <property type="entry name" value="PRK00281.1-4"/>
    <property type="match status" value="1"/>
</dbReference>
<dbReference type="NCBIfam" id="TIGR00753">
    <property type="entry name" value="undec_PP_bacA"/>
    <property type="match status" value="1"/>
</dbReference>
<dbReference type="PANTHER" id="PTHR30622">
    <property type="entry name" value="UNDECAPRENYL-DIPHOSPHATASE"/>
    <property type="match status" value="1"/>
</dbReference>
<dbReference type="PANTHER" id="PTHR30622:SF3">
    <property type="entry name" value="UNDECAPRENYL-DIPHOSPHATASE"/>
    <property type="match status" value="1"/>
</dbReference>
<dbReference type="Pfam" id="PF02673">
    <property type="entry name" value="BacA"/>
    <property type="match status" value="1"/>
</dbReference>
<proteinExistence type="inferred from homology"/>
<sequence>MDIIQVIVLSIIEGITEFLPISSTGHLIIVSNLMNLAQNAVQTNFEITIQLASIFAVCYEYREKFYNNLELWKKIIISFIPVGIMGLLFHKIVYQLFTVQIVATAFIVGGIIFLIVEKYYKEKEHNIKDLKDISYKQSLLIGIAQAFSLIPGTSRSGATIVGGMLCNLNRKTATEFSFLGALPVMLAASLFDIVKHHSELGSGDISNLVVGFIVSFFMALITIRLFLKYIEKYNFVPFGIYRILFGVILLMFFVR</sequence>
<gene>
    <name evidence="1" type="primary">uppP</name>
    <name type="ordered locus">Maeo_1371</name>
</gene>
<evidence type="ECO:0000255" key="1">
    <source>
        <dbReference type="HAMAP-Rule" id="MF_01006"/>
    </source>
</evidence>
<comment type="function">
    <text evidence="1">Catalyzes the dephosphorylation of undecaprenyl diphosphate (UPP).</text>
</comment>
<comment type="catalytic activity">
    <reaction evidence="1">
        <text>di-trans,octa-cis-undecaprenyl diphosphate + H2O = di-trans,octa-cis-undecaprenyl phosphate + phosphate + H(+)</text>
        <dbReference type="Rhea" id="RHEA:28094"/>
        <dbReference type="ChEBI" id="CHEBI:15377"/>
        <dbReference type="ChEBI" id="CHEBI:15378"/>
        <dbReference type="ChEBI" id="CHEBI:43474"/>
        <dbReference type="ChEBI" id="CHEBI:58405"/>
        <dbReference type="ChEBI" id="CHEBI:60392"/>
        <dbReference type="EC" id="3.6.1.27"/>
    </reaction>
</comment>
<comment type="subcellular location">
    <subcellularLocation>
        <location evidence="1">Cell membrane</location>
        <topology evidence="1">Multi-pass membrane protein</topology>
    </subcellularLocation>
</comment>
<comment type="similarity">
    <text evidence="1">Belongs to the UppP family.</text>
</comment>
<feature type="chain" id="PRO_1000062802" description="Undecaprenyl-diphosphatase">
    <location>
        <begin position="1"/>
        <end position="255"/>
    </location>
</feature>
<feature type="transmembrane region" description="Helical" evidence="1">
    <location>
        <begin position="1"/>
        <end position="21"/>
    </location>
</feature>
<feature type="transmembrane region" description="Helical" evidence="1">
    <location>
        <begin position="75"/>
        <end position="95"/>
    </location>
</feature>
<feature type="transmembrane region" description="Helical" evidence="1">
    <location>
        <begin position="96"/>
        <end position="116"/>
    </location>
</feature>
<feature type="transmembrane region" description="Helical" evidence="1">
    <location>
        <begin position="174"/>
        <end position="194"/>
    </location>
</feature>
<feature type="transmembrane region" description="Helical" evidence="1">
    <location>
        <begin position="203"/>
        <end position="223"/>
    </location>
</feature>
<feature type="transmembrane region" description="Helical" evidence="1">
    <location>
        <begin position="234"/>
        <end position="254"/>
    </location>
</feature>
<organism>
    <name type="scientific">Methanococcus aeolicus (strain ATCC BAA-1280 / DSM 17508 / OCM 812 / Nankai-3)</name>
    <dbReference type="NCBI Taxonomy" id="419665"/>
    <lineage>
        <taxon>Archaea</taxon>
        <taxon>Methanobacteriati</taxon>
        <taxon>Methanobacteriota</taxon>
        <taxon>Methanomada group</taxon>
        <taxon>Methanococci</taxon>
        <taxon>Methanococcales</taxon>
        <taxon>Methanococcaceae</taxon>
        <taxon>Methanococcus</taxon>
    </lineage>
</organism>
<reference key="1">
    <citation type="submission" date="2007-06" db="EMBL/GenBank/DDBJ databases">
        <title>Complete sequence of Methanococcus aeolicus Nankai-3.</title>
        <authorList>
            <consortium name="US DOE Joint Genome Institute"/>
            <person name="Copeland A."/>
            <person name="Lucas S."/>
            <person name="Lapidus A."/>
            <person name="Barry K."/>
            <person name="Glavina del Rio T."/>
            <person name="Dalin E."/>
            <person name="Tice H."/>
            <person name="Pitluck S."/>
            <person name="Chain P."/>
            <person name="Malfatti S."/>
            <person name="Shin M."/>
            <person name="Vergez L."/>
            <person name="Schmutz J."/>
            <person name="Larimer F."/>
            <person name="Land M."/>
            <person name="Hauser L."/>
            <person name="Kyrpides N."/>
            <person name="Lykidis A."/>
            <person name="Sieprawska-Lupa M."/>
            <person name="Whitman W.B."/>
            <person name="Richardson P."/>
        </authorList>
    </citation>
    <scope>NUCLEOTIDE SEQUENCE [LARGE SCALE GENOMIC DNA]</scope>
    <source>
        <strain>ATCC BAA-1280 / DSM 17508 / OCM 812 / Nankai-3</strain>
    </source>
</reference>
<protein>
    <recommendedName>
        <fullName evidence="1">Undecaprenyl-diphosphatase</fullName>
        <ecNumber evidence="1">3.6.1.27</ecNumber>
    </recommendedName>
    <alternativeName>
        <fullName evidence="1">Undecaprenyl pyrophosphate phosphatase</fullName>
    </alternativeName>
</protein>
<accession>A6UWS5</accession>